<accession>B9M522</accession>
<dbReference type="EMBL" id="CP001390">
    <property type="protein sequence ID" value="ACM21706.1"/>
    <property type="molecule type" value="Genomic_DNA"/>
</dbReference>
<dbReference type="RefSeq" id="WP_012648434.1">
    <property type="nucleotide sequence ID" value="NC_011979.1"/>
</dbReference>
<dbReference type="SMR" id="B9M522"/>
<dbReference type="STRING" id="316067.Geob_3363"/>
<dbReference type="KEGG" id="geo:Geob_3363"/>
<dbReference type="eggNOG" id="COG0291">
    <property type="taxonomic scope" value="Bacteria"/>
</dbReference>
<dbReference type="HOGENOM" id="CLU_169643_4_3_7"/>
<dbReference type="OrthoDB" id="9804851at2"/>
<dbReference type="Proteomes" id="UP000007721">
    <property type="component" value="Chromosome"/>
</dbReference>
<dbReference type="GO" id="GO:0022625">
    <property type="term" value="C:cytosolic large ribosomal subunit"/>
    <property type="evidence" value="ECO:0007669"/>
    <property type="project" value="TreeGrafter"/>
</dbReference>
<dbReference type="GO" id="GO:0003735">
    <property type="term" value="F:structural constituent of ribosome"/>
    <property type="evidence" value="ECO:0007669"/>
    <property type="project" value="InterPro"/>
</dbReference>
<dbReference type="GO" id="GO:0006412">
    <property type="term" value="P:translation"/>
    <property type="evidence" value="ECO:0007669"/>
    <property type="project" value="UniProtKB-UniRule"/>
</dbReference>
<dbReference type="FunFam" id="4.10.410.60:FF:000001">
    <property type="entry name" value="50S ribosomal protein L35"/>
    <property type="match status" value="1"/>
</dbReference>
<dbReference type="Gene3D" id="4.10.410.60">
    <property type="match status" value="1"/>
</dbReference>
<dbReference type="HAMAP" id="MF_00514">
    <property type="entry name" value="Ribosomal_bL35"/>
    <property type="match status" value="1"/>
</dbReference>
<dbReference type="InterPro" id="IPR001706">
    <property type="entry name" value="Ribosomal_bL35"/>
</dbReference>
<dbReference type="InterPro" id="IPR021137">
    <property type="entry name" value="Ribosomal_bL35-like"/>
</dbReference>
<dbReference type="InterPro" id="IPR018265">
    <property type="entry name" value="Ribosomal_bL35_CS"/>
</dbReference>
<dbReference type="InterPro" id="IPR037229">
    <property type="entry name" value="Ribosomal_bL35_sf"/>
</dbReference>
<dbReference type="NCBIfam" id="TIGR00001">
    <property type="entry name" value="rpmI_bact"/>
    <property type="match status" value="1"/>
</dbReference>
<dbReference type="PANTHER" id="PTHR33343">
    <property type="entry name" value="54S RIBOSOMAL PROTEIN BL35M"/>
    <property type="match status" value="1"/>
</dbReference>
<dbReference type="PANTHER" id="PTHR33343:SF1">
    <property type="entry name" value="LARGE RIBOSOMAL SUBUNIT PROTEIN BL35M"/>
    <property type="match status" value="1"/>
</dbReference>
<dbReference type="Pfam" id="PF01632">
    <property type="entry name" value="Ribosomal_L35p"/>
    <property type="match status" value="1"/>
</dbReference>
<dbReference type="PRINTS" id="PR00064">
    <property type="entry name" value="RIBOSOMALL35"/>
</dbReference>
<dbReference type="SUPFAM" id="SSF143034">
    <property type="entry name" value="L35p-like"/>
    <property type="match status" value="1"/>
</dbReference>
<dbReference type="PROSITE" id="PS00936">
    <property type="entry name" value="RIBOSOMAL_L35"/>
    <property type="match status" value="1"/>
</dbReference>
<feature type="chain" id="PRO_1000194075" description="Large ribosomal subunit protein bL35">
    <location>
        <begin position="1"/>
        <end position="65"/>
    </location>
</feature>
<feature type="region of interest" description="Disordered" evidence="2">
    <location>
        <begin position="1"/>
        <end position="41"/>
    </location>
</feature>
<feature type="compositionally biased region" description="Basic residues" evidence="2">
    <location>
        <begin position="1"/>
        <end position="26"/>
    </location>
</feature>
<reference key="1">
    <citation type="submission" date="2009-01" db="EMBL/GenBank/DDBJ databases">
        <title>Complete sequence of Geobacter sp. FRC-32.</title>
        <authorList>
            <consortium name="US DOE Joint Genome Institute"/>
            <person name="Lucas S."/>
            <person name="Copeland A."/>
            <person name="Lapidus A."/>
            <person name="Glavina del Rio T."/>
            <person name="Dalin E."/>
            <person name="Tice H."/>
            <person name="Bruce D."/>
            <person name="Goodwin L."/>
            <person name="Pitluck S."/>
            <person name="Saunders E."/>
            <person name="Brettin T."/>
            <person name="Detter J.C."/>
            <person name="Han C."/>
            <person name="Larimer F."/>
            <person name="Land M."/>
            <person name="Hauser L."/>
            <person name="Kyrpides N."/>
            <person name="Ovchinnikova G."/>
            <person name="Kostka J."/>
            <person name="Richardson P."/>
        </authorList>
    </citation>
    <scope>NUCLEOTIDE SEQUENCE [LARGE SCALE GENOMIC DNA]</scope>
    <source>
        <strain>DSM 22248 / JCM 15807 / FRC-32</strain>
    </source>
</reference>
<comment type="similarity">
    <text evidence="1">Belongs to the bacterial ribosomal protein bL35 family.</text>
</comment>
<gene>
    <name evidence="1" type="primary">rpmI</name>
    <name type="ordered locus">Geob_3363</name>
</gene>
<name>RL35_GEODF</name>
<proteinExistence type="inferred from homology"/>
<organism>
    <name type="scientific">Geotalea daltonii (strain DSM 22248 / JCM 15807 / FRC-32)</name>
    <name type="common">Geobacter daltonii</name>
    <dbReference type="NCBI Taxonomy" id="316067"/>
    <lineage>
        <taxon>Bacteria</taxon>
        <taxon>Pseudomonadati</taxon>
        <taxon>Thermodesulfobacteriota</taxon>
        <taxon>Desulfuromonadia</taxon>
        <taxon>Geobacterales</taxon>
        <taxon>Geobacteraceae</taxon>
        <taxon>Geotalea</taxon>
    </lineage>
</organism>
<evidence type="ECO:0000255" key="1">
    <source>
        <dbReference type="HAMAP-Rule" id="MF_00514"/>
    </source>
</evidence>
<evidence type="ECO:0000256" key="2">
    <source>
        <dbReference type="SAM" id="MobiDB-lite"/>
    </source>
</evidence>
<evidence type="ECO:0000305" key="3"/>
<sequence length="65" mass="7369">MPKIKTHRGAAKRFSKTGTGKIKRSHAFTSHILTSKTRKNKRNLRKGAIVEAVDHKNIAKLIPYM</sequence>
<protein>
    <recommendedName>
        <fullName evidence="1">Large ribosomal subunit protein bL35</fullName>
    </recommendedName>
    <alternativeName>
        <fullName evidence="3">50S ribosomal protein L35</fullName>
    </alternativeName>
</protein>
<keyword id="KW-1185">Reference proteome</keyword>
<keyword id="KW-0687">Ribonucleoprotein</keyword>
<keyword id="KW-0689">Ribosomal protein</keyword>